<keyword id="KW-0963">Cytoplasm</keyword>
<keyword id="KW-0256">Endoplasmic reticulum</keyword>
<keyword id="KW-0349">Heme</keyword>
<keyword id="KW-0408">Iron</keyword>
<keyword id="KW-0445">Lipid transport</keyword>
<keyword id="KW-0472">Membrane</keyword>
<keyword id="KW-0479">Metal-binding</keyword>
<keyword id="KW-0492">Microsome</keyword>
<keyword id="KW-1185">Reference proteome</keyword>
<keyword id="KW-0813">Transport</keyword>
<dbReference type="EMBL" id="CP000496">
    <property type="protein sequence ID" value="ABN65091.2"/>
    <property type="molecule type" value="Genomic_DNA"/>
</dbReference>
<dbReference type="RefSeq" id="XP_001383120.2">
    <property type="nucleotide sequence ID" value="XM_001383083.1"/>
</dbReference>
<dbReference type="SMR" id="A3LPR9"/>
<dbReference type="FunCoup" id="A3LPR9">
    <property type="interactions" value="59"/>
</dbReference>
<dbReference type="STRING" id="322104.A3LPR9"/>
<dbReference type="GeneID" id="4837469"/>
<dbReference type="KEGG" id="pic:PICST_30049"/>
<dbReference type="eggNOG" id="KOG1471">
    <property type="taxonomic scope" value="Eukaryota"/>
</dbReference>
<dbReference type="HOGENOM" id="CLU_045138_0_1_1"/>
<dbReference type="InParanoid" id="A3LPR9"/>
<dbReference type="OMA" id="KRVVTWN"/>
<dbReference type="OrthoDB" id="75724at2759"/>
<dbReference type="Proteomes" id="UP000002258">
    <property type="component" value="Chromosome 2"/>
</dbReference>
<dbReference type="GO" id="GO:0032541">
    <property type="term" value="C:cortical endoplasmic reticulum"/>
    <property type="evidence" value="ECO:0007669"/>
    <property type="project" value="EnsemblFungi"/>
</dbReference>
<dbReference type="GO" id="GO:0005829">
    <property type="term" value="C:cytosol"/>
    <property type="evidence" value="ECO:0007669"/>
    <property type="project" value="EnsemblFungi"/>
</dbReference>
<dbReference type="GO" id="GO:0005789">
    <property type="term" value="C:endoplasmic reticulum membrane"/>
    <property type="evidence" value="ECO:0007669"/>
    <property type="project" value="UniProtKB-SubCell"/>
</dbReference>
<dbReference type="GO" id="GO:0005886">
    <property type="term" value="C:plasma membrane"/>
    <property type="evidence" value="ECO:0007669"/>
    <property type="project" value="EnsemblFungi"/>
</dbReference>
<dbReference type="GO" id="GO:0020037">
    <property type="term" value="F:heme binding"/>
    <property type="evidence" value="ECO:0007669"/>
    <property type="project" value="EnsemblFungi"/>
</dbReference>
<dbReference type="GO" id="GO:0046872">
    <property type="term" value="F:metal ion binding"/>
    <property type="evidence" value="ECO:0007669"/>
    <property type="project" value="UniProtKB-KW"/>
</dbReference>
<dbReference type="GO" id="GO:0008526">
    <property type="term" value="F:phosphatidylinositol transfer activity"/>
    <property type="evidence" value="ECO:0007669"/>
    <property type="project" value="EnsemblFungi"/>
</dbReference>
<dbReference type="GO" id="GO:0043001">
    <property type="term" value="P:Golgi to plasma membrane protein transport"/>
    <property type="evidence" value="ECO:0007669"/>
    <property type="project" value="EnsemblFungi"/>
</dbReference>
<dbReference type="GO" id="GO:0046488">
    <property type="term" value="P:phosphatidylinositol metabolic process"/>
    <property type="evidence" value="ECO:0007669"/>
    <property type="project" value="EnsemblFungi"/>
</dbReference>
<dbReference type="GO" id="GO:2000114">
    <property type="term" value="P:regulation of establishment of cell polarity"/>
    <property type="evidence" value="ECO:0007669"/>
    <property type="project" value="EnsemblFungi"/>
</dbReference>
<dbReference type="GO" id="GO:0017157">
    <property type="term" value="P:regulation of exocytosis"/>
    <property type="evidence" value="ECO:0007669"/>
    <property type="project" value="EnsemblFungi"/>
</dbReference>
<dbReference type="CDD" id="cd00170">
    <property type="entry name" value="SEC14"/>
    <property type="match status" value="1"/>
</dbReference>
<dbReference type="Gene3D" id="3.40.525.10">
    <property type="entry name" value="CRAL-TRIO lipid binding domain"/>
    <property type="match status" value="1"/>
</dbReference>
<dbReference type="InterPro" id="IPR001251">
    <property type="entry name" value="CRAL-TRIO_dom"/>
</dbReference>
<dbReference type="InterPro" id="IPR036865">
    <property type="entry name" value="CRAL-TRIO_dom_sf"/>
</dbReference>
<dbReference type="InterPro" id="IPR036273">
    <property type="entry name" value="CRAL/TRIO_N_dom_sf"/>
</dbReference>
<dbReference type="InterPro" id="IPR042938">
    <property type="entry name" value="Sfh5"/>
</dbReference>
<dbReference type="PANTHER" id="PTHR47669">
    <property type="entry name" value="PHOSPHATIDYLINOSITOL TRANSFER PROTEIN SFH5"/>
    <property type="match status" value="1"/>
</dbReference>
<dbReference type="PANTHER" id="PTHR47669:SF1">
    <property type="entry name" value="PHOSPHATIDYLINOSITOL TRANSFER PROTEIN SFH5"/>
    <property type="match status" value="1"/>
</dbReference>
<dbReference type="Pfam" id="PF00650">
    <property type="entry name" value="CRAL_TRIO"/>
    <property type="match status" value="1"/>
</dbReference>
<dbReference type="SMART" id="SM00516">
    <property type="entry name" value="SEC14"/>
    <property type="match status" value="1"/>
</dbReference>
<dbReference type="SUPFAM" id="SSF52087">
    <property type="entry name" value="CRAL/TRIO domain"/>
    <property type="match status" value="1"/>
</dbReference>
<dbReference type="SUPFAM" id="SSF46938">
    <property type="entry name" value="CRAL/TRIO N-terminal domain"/>
    <property type="match status" value="1"/>
</dbReference>
<dbReference type="PROSITE" id="PS50191">
    <property type="entry name" value="CRAL_TRIO"/>
    <property type="match status" value="1"/>
</dbReference>
<sequence length="328" mass="37198">MSEPEKTDSVETVKNTIKSTQLTTEHAKKLTQVVNSIPTILSKLDNSEYDEIFGHRINVDSKKFVDVAVRNEILLKFLAADEYDVELATKRLIDTLNWRNKFHPLSAAFDENFNKALNDLGAITNFVGLKSDNLNVVTWNFYGATTPKKLFEEYGDNAGTTTNQRPGSQFLRWRIGLMEKSLQLVDFTDPKNNKIAQVHDYNNVSMFKVDKGMRAATKEIIKIFGDNYPELLSTKFFINVPSLMSWVFTFFKTIGVISEATLKKFQVLNSGNLTEWFGKSNLPPTYGGDSKSSMKELNVASIKLSPYGEYILEELGKKEIEDVIDEVE</sequence>
<feature type="chain" id="PRO_0000324987" description="Phosphatidylinositol transfer protein SFH5">
    <location>
        <begin position="1"/>
        <end position="328"/>
    </location>
</feature>
<feature type="domain" description="CRAL-TRIO" evidence="3">
    <location>
        <begin position="129"/>
        <end position="294"/>
    </location>
</feature>
<feature type="binding site" evidence="1">
    <location>
        <position position="142"/>
    </location>
    <ligand>
        <name>heme</name>
        <dbReference type="ChEBI" id="CHEBI:30413"/>
    </ligand>
</feature>
<feature type="binding site" evidence="1">
    <location>
        <position position="174"/>
    </location>
    <ligand>
        <name>heme</name>
        <dbReference type="ChEBI" id="CHEBI:30413"/>
    </ligand>
</feature>
<feature type="binding site" evidence="1">
    <location>
        <position position="199"/>
    </location>
    <ligand>
        <name>heme</name>
        <dbReference type="ChEBI" id="CHEBI:30413"/>
    </ligand>
</feature>
<feature type="binding site" description="proximal binding residue" evidence="1">
    <location>
        <position position="201"/>
    </location>
    <ligand>
        <name>heme</name>
        <dbReference type="ChEBI" id="CHEBI:30413"/>
    </ligand>
    <ligandPart>
        <name>Fe</name>
        <dbReference type="ChEBI" id="CHEBI:18248"/>
    </ligandPart>
</feature>
<feature type="binding site" evidence="1">
    <location>
        <position position="235"/>
    </location>
    <ligand>
        <name>heme</name>
        <dbReference type="ChEBI" id="CHEBI:30413"/>
    </ligand>
</feature>
<proteinExistence type="inferred from homology"/>
<accession>A3LPR9</accession>
<comment type="function">
    <text evidence="2">Non-classical phosphatidylinositol (PtdIns) transfer protein (PITP), which exhibits PtdIns-binding/transfer activity in the absence of detectable PtdCho-binding/transfer activity. Regulates PtdIns(4,5)P2 homeostasis at the plasma membrane. Heme-binding protein that may play a role in organic oxidant-induced stress responses.</text>
</comment>
<comment type="catalytic activity">
    <reaction evidence="2">
        <text>a 1,2-diacyl-sn-glycero-3-phospho-(1D-myo-inositol)(in) = a 1,2-diacyl-sn-glycero-3-phospho-(1D-myo-inositol)(out)</text>
        <dbReference type="Rhea" id="RHEA:38691"/>
        <dbReference type="ChEBI" id="CHEBI:57880"/>
    </reaction>
    <physiologicalReaction direction="left-to-right" evidence="2">
        <dbReference type="Rhea" id="RHEA:38692"/>
    </physiologicalReaction>
</comment>
<comment type="cofactor">
    <cofactor evidence="1">
        <name>heme b</name>
        <dbReference type="ChEBI" id="CHEBI:60344"/>
    </cofactor>
</comment>
<comment type="subcellular location">
    <subcellularLocation>
        <location evidence="2">Cytoplasm</location>
    </subcellularLocation>
    <subcellularLocation>
        <location evidence="2">Endoplasmic reticulum membrane</location>
        <topology evidence="2">Peripheral membrane protein</topology>
    </subcellularLocation>
    <subcellularLocation>
        <location evidence="2">Microsome membrane</location>
        <topology evidence="2">Peripheral membrane protein</topology>
    </subcellularLocation>
</comment>
<comment type="similarity">
    <text evidence="4">Belongs to the SFH5 family.</text>
</comment>
<protein>
    <recommendedName>
        <fullName>Phosphatidylinositol transfer protein SFH5</fullName>
        <shortName>PITP SFH5</shortName>
    </recommendedName>
</protein>
<name>SFH5_PICST</name>
<gene>
    <name type="primary">SFH5</name>
    <name type="ORF">PICST_30049</name>
</gene>
<organism>
    <name type="scientific">Scheffersomyces stipitis (strain ATCC 58785 / CBS 6054 / NBRC 10063 / NRRL Y-11545)</name>
    <name type="common">Yeast</name>
    <name type="synonym">Pichia stipitis</name>
    <dbReference type="NCBI Taxonomy" id="322104"/>
    <lineage>
        <taxon>Eukaryota</taxon>
        <taxon>Fungi</taxon>
        <taxon>Dikarya</taxon>
        <taxon>Ascomycota</taxon>
        <taxon>Saccharomycotina</taxon>
        <taxon>Pichiomycetes</taxon>
        <taxon>Debaryomycetaceae</taxon>
        <taxon>Scheffersomyces</taxon>
    </lineage>
</organism>
<evidence type="ECO:0000250" key="1">
    <source>
        <dbReference type="UniProtKB" id="A6ZQI5"/>
    </source>
</evidence>
<evidence type="ECO:0000250" key="2">
    <source>
        <dbReference type="UniProtKB" id="P47008"/>
    </source>
</evidence>
<evidence type="ECO:0000255" key="3">
    <source>
        <dbReference type="PROSITE-ProRule" id="PRU00056"/>
    </source>
</evidence>
<evidence type="ECO:0000305" key="4"/>
<reference key="1">
    <citation type="journal article" date="2007" name="Nat. Biotechnol.">
        <title>Genome sequence of the lignocellulose-bioconverting and xylose-fermenting yeast Pichia stipitis.</title>
        <authorList>
            <person name="Jeffries T.W."/>
            <person name="Grigoriev I.V."/>
            <person name="Grimwood J."/>
            <person name="Laplaza J.M."/>
            <person name="Aerts A."/>
            <person name="Salamov A."/>
            <person name="Schmutz J."/>
            <person name="Lindquist E."/>
            <person name="Dehal P."/>
            <person name="Shapiro H."/>
            <person name="Jin Y.-S."/>
            <person name="Passoth V."/>
            <person name="Richardson P.M."/>
        </authorList>
    </citation>
    <scope>NUCLEOTIDE SEQUENCE [LARGE SCALE GENOMIC DNA]</scope>
    <source>
        <strain>ATCC 58785 / CBS 6054 / NBRC 10063 / NRRL Y-11545</strain>
    </source>
</reference>